<accession>A5UGT0</accession>
<proteinExistence type="inferred from homology"/>
<feature type="chain" id="PRO_1000008142" description="Thiamine-phosphate synthase">
    <location>
        <begin position="1"/>
        <end position="226"/>
    </location>
</feature>
<feature type="binding site" evidence="1">
    <location>
        <begin position="46"/>
        <end position="50"/>
    </location>
    <ligand>
        <name>4-amino-2-methyl-5-(diphosphooxymethyl)pyrimidine</name>
        <dbReference type="ChEBI" id="CHEBI:57841"/>
    </ligand>
</feature>
<feature type="binding site" evidence="1">
    <location>
        <position position="83"/>
    </location>
    <ligand>
        <name>4-amino-2-methyl-5-(diphosphooxymethyl)pyrimidine</name>
        <dbReference type="ChEBI" id="CHEBI:57841"/>
    </ligand>
</feature>
<feature type="binding site" evidence="1">
    <location>
        <position position="84"/>
    </location>
    <ligand>
        <name>Mg(2+)</name>
        <dbReference type="ChEBI" id="CHEBI:18420"/>
    </ligand>
</feature>
<feature type="binding site" evidence="1">
    <location>
        <position position="103"/>
    </location>
    <ligand>
        <name>Mg(2+)</name>
        <dbReference type="ChEBI" id="CHEBI:18420"/>
    </ligand>
</feature>
<feature type="binding site" evidence="1">
    <location>
        <position position="122"/>
    </location>
    <ligand>
        <name>4-amino-2-methyl-5-(diphosphooxymethyl)pyrimidine</name>
        <dbReference type="ChEBI" id="CHEBI:57841"/>
    </ligand>
</feature>
<feature type="binding site" evidence="1">
    <location>
        <begin position="149"/>
        <end position="151"/>
    </location>
    <ligand>
        <name>2-[(2R,5Z)-2-carboxy-4-methylthiazol-5(2H)-ylidene]ethyl phosphate</name>
        <dbReference type="ChEBI" id="CHEBI:62899"/>
    </ligand>
</feature>
<feature type="binding site" evidence="1">
    <location>
        <position position="152"/>
    </location>
    <ligand>
        <name>4-amino-2-methyl-5-(diphosphooxymethyl)pyrimidine</name>
        <dbReference type="ChEBI" id="CHEBI:57841"/>
    </ligand>
</feature>
<feature type="binding site" evidence="1">
    <location>
        <position position="181"/>
    </location>
    <ligand>
        <name>2-[(2R,5Z)-2-carboxy-4-methylthiazol-5(2H)-ylidene]ethyl phosphate</name>
        <dbReference type="ChEBI" id="CHEBI:62899"/>
    </ligand>
</feature>
<feature type="binding site" evidence="1">
    <location>
        <begin position="201"/>
        <end position="202"/>
    </location>
    <ligand>
        <name>2-[(2R,5Z)-2-carboxy-4-methylthiazol-5(2H)-ylidene]ethyl phosphate</name>
        <dbReference type="ChEBI" id="CHEBI:62899"/>
    </ligand>
</feature>
<sequence length="226" mass="24672">MKNIQKILPLYFVAGTQDCRHLGENLSENLLFVLKQALEGGITCFQFRDKGKFSLEHTPSAQKALAINCRDLCREYGVPFIVDDNVDLALAIEADGIHVGQSDMPVQEIRAKTDKPLIIGWSVNRLDEAKIGENLAEIDYFGIGPIFPTQSKENPKPTLGMAFIQTLRNAGITKPLVAIGGVKLAHVKTLREFGADGVAVITAITHADNVQAATKALREASDEYAK</sequence>
<gene>
    <name evidence="1" type="primary">thiE</name>
    <name type="ordered locus">CGSHiGG_05275</name>
</gene>
<name>THIE_HAEIG</name>
<reference key="1">
    <citation type="journal article" date="2007" name="Genome Biol.">
        <title>Characterization and modeling of the Haemophilus influenzae core and supragenomes based on the complete genomic sequences of Rd and 12 clinical nontypeable strains.</title>
        <authorList>
            <person name="Hogg J.S."/>
            <person name="Hu F.Z."/>
            <person name="Janto B."/>
            <person name="Boissy R."/>
            <person name="Hayes J."/>
            <person name="Keefe R."/>
            <person name="Post J.C."/>
            <person name="Ehrlich G.D."/>
        </authorList>
    </citation>
    <scope>NUCLEOTIDE SEQUENCE [LARGE SCALE GENOMIC DNA]</scope>
    <source>
        <strain>PittGG</strain>
    </source>
</reference>
<protein>
    <recommendedName>
        <fullName evidence="1">Thiamine-phosphate synthase</fullName>
        <shortName evidence="1">TP synthase</shortName>
        <shortName evidence="1">TPS</shortName>
        <ecNumber evidence="1">2.5.1.3</ecNumber>
    </recommendedName>
    <alternativeName>
        <fullName evidence="1">Thiamine-phosphate pyrophosphorylase</fullName>
        <shortName evidence="1">TMP pyrophosphorylase</shortName>
        <shortName evidence="1">TMP-PPase</shortName>
    </alternativeName>
</protein>
<dbReference type="EC" id="2.5.1.3" evidence="1"/>
<dbReference type="EMBL" id="CP000672">
    <property type="protein sequence ID" value="ABQ99985.1"/>
    <property type="molecule type" value="Genomic_DNA"/>
</dbReference>
<dbReference type="SMR" id="A5UGT0"/>
<dbReference type="KEGG" id="hiq:CGSHiGG_05275"/>
<dbReference type="HOGENOM" id="CLU_018272_3_2_6"/>
<dbReference type="UniPathway" id="UPA00060">
    <property type="reaction ID" value="UER00141"/>
</dbReference>
<dbReference type="Proteomes" id="UP000001990">
    <property type="component" value="Chromosome"/>
</dbReference>
<dbReference type="GO" id="GO:0005737">
    <property type="term" value="C:cytoplasm"/>
    <property type="evidence" value="ECO:0007669"/>
    <property type="project" value="TreeGrafter"/>
</dbReference>
<dbReference type="GO" id="GO:0000287">
    <property type="term" value="F:magnesium ion binding"/>
    <property type="evidence" value="ECO:0007669"/>
    <property type="project" value="UniProtKB-UniRule"/>
</dbReference>
<dbReference type="GO" id="GO:0004789">
    <property type="term" value="F:thiamine-phosphate diphosphorylase activity"/>
    <property type="evidence" value="ECO:0007669"/>
    <property type="project" value="UniProtKB-UniRule"/>
</dbReference>
<dbReference type="GO" id="GO:0009228">
    <property type="term" value="P:thiamine biosynthetic process"/>
    <property type="evidence" value="ECO:0007669"/>
    <property type="project" value="UniProtKB-KW"/>
</dbReference>
<dbReference type="GO" id="GO:0009229">
    <property type="term" value="P:thiamine diphosphate biosynthetic process"/>
    <property type="evidence" value="ECO:0007669"/>
    <property type="project" value="UniProtKB-UniRule"/>
</dbReference>
<dbReference type="CDD" id="cd00564">
    <property type="entry name" value="TMP_TenI"/>
    <property type="match status" value="1"/>
</dbReference>
<dbReference type="FunFam" id="3.20.20.70:FF:000096">
    <property type="entry name" value="Thiamine-phosphate synthase"/>
    <property type="match status" value="1"/>
</dbReference>
<dbReference type="Gene3D" id="3.20.20.70">
    <property type="entry name" value="Aldolase class I"/>
    <property type="match status" value="1"/>
</dbReference>
<dbReference type="HAMAP" id="MF_00097">
    <property type="entry name" value="TMP_synthase"/>
    <property type="match status" value="1"/>
</dbReference>
<dbReference type="InterPro" id="IPR013785">
    <property type="entry name" value="Aldolase_TIM"/>
</dbReference>
<dbReference type="InterPro" id="IPR036206">
    <property type="entry name" value="ThiamineP_synth_sf"/>
</dbReference>
<dbReference type="InterPro" id="IPR022998">
    <property type="entry name" value="ThiamineP_synth_TenI"/>
</dbReference>
<dbReference type="InterPro" id="IPR034291">
    <property type="entry name" value="TMP_synthase"/>
</dbReference>
<dbReference type="NCBIfam" id="TIGR00693">
    <property type="entry name" value="thiE"/>
    <property type="match status" value="1"/>
</dbReference>
<dbReference type="PANTHER" id="PTHR20857">
    <property type="entry name" value="THIAMINE-PHOSPHATE PYROPHOSPHORYLASE"/>
    <property type="match status" value="1"/>
</dbReference>
<dbReference type="PANTHER" id="PTHR20857:SF15">
    <property type="entry name" value="THIAMINE-PHOSPHATE SYNTHASE"/>
    <property type="match status" value="1"/>
</dbReference>
<dbReference type="Pfam" id="PF02581">
    <property type="entry name" value="TMP-TENI"/>
    <property type="match status" value="1"/>
</dbReference>
<dbReference type="SUPFAM" id="SSF51391">
    <property type="entry name" value="Thiamin phosphate synthase"/>
    <property type="match status" value="1"/>
</dbReference>
<organism>
    <name type="scientific">Haemophilus influenzae (strain PittGG)</name>
    <dbReference type="NCBI Taxonomy" id="374931"/>
    <lineage>
        <taxon>Bacteria</taxon>
        <taxon>Pseudomonadati</taxon>
        <taxon>Pseudomonadota</taxon>
        <taxon>Gammaproteobacteria</taxon>
        <taxon>Pasteurellales</taxon>
        <taxon>Pasteurellaceae</taxon>
        <taxon>Haemophilus</taxon>
    </lineage>
</organism>
<comment type="function">
    <text evidence="1">Condenses 4-methyl-5-(beta-hydroxyethyl)thiazole monophosphate (THZ-P) and 2-methyl-4-amino-5-hydroxymethyl pyrimidine pyrophosphate (HMP-PP) to form thiamine monophosphate (TMP).</text>
</comment>
<comment type="catalytic activity">
    <reaction evidence="1">
        <text>2-[(2R,5Z)-2-carboxy-4-methylthiazol-5(2H)-ylidene]ethyl phosphate + 4-amino-2-methyl-5-(diphosphooxymethyl)pyrimidine + 2 H(+) = thiamine phosphate + CO2 + diphosphate</text>
        <dbReference type="Rhea" id="RHEA:47844"/>
        <dbReference type="ChEBI" id="CHEBI:15378"/>
        <dbReference type="ChEBI" id="CHEBI:16526"/>
        <dbReference type="ChEBI" id="CHEBI:33019"/>
        <dbReference type="ChEBI" id="CHEBI:37575"/>
        <dbReference type="ChEBI" id="CHEBI:57841"/>
        <dbReference type="ChEBI" id="CHEBI:62899"/>
        <dbReference type="EC" id="2.5.1.3"/>
    </reaction>
</comment>
<comment type="catalytic activity">
    <reaction evidence="1">
        <text>2-(2-carboxy-4-methylthiazol-5-yl)ethyl phosphate + 4-amino-2-methyl-5-(diphosphooxymethyl)pyrimidine + 2 H(+) = thiamine phosphate + CO2 + diphosphate</text>
        <dbReference type="Rhea" id="RHEA:47848"/>
        <dbReference type="ChEBI" id="CHEBI:15378"/>
        <dbReference type="ChEBI" id="CHEBI:16526"/>
        <dbReference type="ChEBI" id="CHEBI:33019"/>
        <dbReference type="ChEBI" id="CHEBI:37575"/>
        <dbReference type="ChEBI" id="CHEBI:57841"/>
        <dbReference type="ChEBI" id="CHEBI:62890"/>
        <dbReference type="EC" id="2.5.1.3"/>
    </reaction>
</comment>
<comment type="catalytic activity">
    <reaction evidence="1">
        <text>4-methyl-5-(2-phosphooxyethyl)-thiazole + 4-amino-2-methyl-5-(diphosphooxymethyl)pyrimidine + H(+) = thiamine phosphate + diphosphate</text>
        <dbReference type="Rhea" id="RHEA:22328"/>
        <dbReference type="ChEBI" id="CHEBI:15378"/>
        <dbReference type="ChEBI" id="CHEBI:33019"/>
        <dbReference type="ChEBI" id="CHEBI:37575"/>
        <dbReference type="ChEBI" id="CHEBI:57841"/>
        <dbReference type="ChEBI" id="CHEBI:58296"/>
        <dbReference type="EC" id="2.5.1.3"/>
    </reaction>
</comment>
<comment type="cofactor">
    <cofactor evidence="1">
        <name>Mg(2+)</name>
        <dbReference type="ChEBI" id="CHEBI:18420"/>
    </cofactor>
    <text evidence="1">Binds 1 Mg(2+) ion per subunit.</text>
</comment>
<comment type="pathway">
    <text evidence="1">Cofactor biosynthesis; thiamine diphosphate biosynthesis; thiamine phosphate from 4-amino-2-methyl-5-diphosphomethylpyrimidine and 4-methyl-5-(2-phosphoethyl)-thiazole: step 1/1.</text>
</comment>
<comment type="similarity">
    <text evidence="1">Belongs to the thiamine-phosphate synthase family.</text>
</comment>
<evidence type="ECO:0000255" key="1">
    <source>
        <dbReference type="HAMAP-Rule" id="MF_00097"/>
    </source>
</evidence>
<keyword id="KW-0460">Magnesium</keyword>
<keyword id="KW-0479">Metal-binding</keyword>
<keyword id="KW-0784">Thiamine biosynthesis</keyword>
<keyword id="KW-0808">Transferase</keyword>